<protein>
    <recommendedName>
        <fullName evidence="1">Serine--tRNA ligase</fullName>
        <ecNumber evidence="1">6.1.1.11</ecNumber>
    </recommendedName>
    <alternativeName>
        <fullName evidence="1">Seryl-tRNA synthetase</fullName>
        <shortName evidence="1">SerRS</shortName>
    </alternativeName>
    <alternativeName>
        <fullName evidence="1">Seryl-tRNA(Ser/Sec) synthetase</fullName>
    </alternativeName>
</protein>
<proteinExistence type="inferred from homology"/>
<organism>
    <name type="scientific">Marinobacter nauticus (strain ATCC 700491 / DSM 11845 / VT8)</name>
    <name type="common">Marinobacter aquaeolei</name>
    <dbReference type="NCBI Taxonomy" id="351348"/>
    <lineage>
        <taxon>Bacteria</taxon>
        <taxon>Pseudomonadati</taxon>
        <taxon>Pseudomonadota</taxon>
        <taxon>Gammaproteobacteria</taxon>
        <taxon>Pseudomonadales</taxon>
        <taxon>Marinobacteraceae</taxon>
        <taxon>Marinobacter</taxon>
    </lineage>
</organism>
<comment type="function">
    <text evidence="1">Catalyzes the attachment of serine to tRNA(Ser). Is also able to aminoacylate tRNA(Sec) with serine, to form the misacylated tRNA L-seryl-tRNA(Sec), which will be further converted into selenocysteinyl-tRNA(Sec).</text>
</comment>
<comment type="catalytic activity">
    <reaction evidence="1">
        <text>tRNA(Ser) + L-serine + ATP = L-seryl-tRNA(Ser) + AMP + diphosphate + H(+)</text>
        <dbReference type="Rhea" id="RHEA:12292"/>
        <dbReference type="Rhea" id="RHEA-COMP:9669"/>
        <dbReference type="Rhea" id="RHEA-COMP:9703"/>
        <dbReference type="ChEBI" id="CHEBI:15378"/>
        <dbReference type="ChEBI" id="CHEBI:30616"/>
        <dbReference type="ChEBI" id="CHEBI:33019"/>
        <dbReference type="ChEBI" id="CHEBI:33384"/>
        <dbReference type="ChEBI" id="CHEBI:78442"/>
        <dbReference type="ChEBI" id="CHEBI:78533"/>
        <dbReference type="ChEBI" id="CHEBI:456215"/>
        <dbReference type="EC" id="6.1.1.11"/>
    </reaction>
</comment>
<comment type="catalytic activity">
    <reaction evidence="1">
        <text>tRNA(Sec) + L-serine + ATP = L-seryl-tRNA(Sec) + AMP + diphosphate + H(+)</text>
        <dbReference type="Rhea" id="RHEA:42580"/>
        <dbReference type="Rhea" id="RHEA-COMP:9742"/>
        <dbReference type="Rhea" id="RHEA-COMP:10128"/>
        <dbReference type="ChEBI" id="CHEBI:15378"/>
        <dbReference type="ChEBI" id="CHEBI:30616"/>
        <dbReference type="ChEBI" id="CHEBI:33019"/>
        <dbReference type="ChEBI" id="CHEBI:33384"/>
        <dbReference type="ChEBI" id="CHEBI:78442"/>
        <dbReference type="ChEBI" id="CHEBI:78533"/>
        <dbReference type="ChEBI" id="CHEBI:456215"/>
        <dbReference type="EC" id="6.1.1.11"/>
    </reaction>
</comment>
<comment type="pathway">
    <text evidence="1">Aminoacyl-tRNA biosynthesis; selenocysteinyl-tRNA(Sec) biosynthesis; L-seryl-tRNA(Sec) from L-serine and tRNA(Sec): step 1/1.</text>
</comment>
<comment type="subunit">
    <text evidence="1">Homodimer. The tRNA molecule binds across the dimer.</text>
</comment>
<comment type="subcellular location">
    <subcellularLocation>
        <location evidence="1">Cytoplasm</location>
    </subcellularLocation>
</comment>
<comment type="domain">
    <text evidence="1">Consists of two distinct domains, a catalytic core and a N-terminal extension that is involved in tRNA binding.</text>
</comment>
<comment type="similarity">
    <text evidence="1">Belongs to the class-II aminoacyl-tRNA synthetase family. Type-1 seryl-tRNA synthetase subfamily.</text>
</comment>
<gene>
    <name evidence="1" type="primary">serS</name>
    <name type="ordered locus">Maqu_1547</name>
</gene>
<accession>A1U0W2</accession>
<name>SYS_MARN8</name>
<dbReference type="EC" id="6.1.1.11" evidence="1"/>
<dbReference type="EMBL" id="CP000514">
    <property type="protein sequence ID" value="ABM18631.1"/>
    <property type="molecule type" value="Genomic_DNA"/>
</dbReference>
<dbReference type="RefSeq" id="WP_011785033.1">
    <property type="nucleotide sequence ID" value="NC_008740.1"/>
</dbReference>
<dbReference type="SMR" id="A1U0W2"/>
<dbReference type="STRING" id="351348.Maqu_1547"/>
<dbReference type="GeneID" id="31821200"/>
<dbReference type="KEGG" id="maq:Maqu_1547"/>
<dbReference type="eggNOG" id="COG0172">
    <property type="taxonomic scope" value="Bacteria"/>
</dbReference>
<dbReference type="HOGENOM" id="CLU_023797_1_1_6"/>
<dbReference type="OrthoDB" id="9804647at2"/>
<dbReference type="UniPathway" id="UPA00906">
    <property type="reaction ID" value="UER00895"/>
</dbReference>
<dbReference type="Proteomes" id="UP000000998">
    <property type="component" value="Chromosome"/>
</dbReference>
<dbReference type="GO" id="GO:0005737">
    <property type="term" value="C:cytoplasm"/>
    <property type="evidence" value="ECO:0007669"/>
    <property type="project" value="UniProtKB-SubCell"/>
</dbReference>
<dbReference type="GO" id="GO:0005524">
    <property type="term" value="F:ATP binding"/>
    <property type="evidence" value="ECO:0007669"/>
    <property type="project" value="UniProtKB-UniRule"/>
</dbReference>
<dbReference type="GO" id="GO:0004828">
    <property type="term" value="F:serine-tRNA ligase activity"/>
    <property type="evidence" value="ECO:0007669"/>
    <property type="project" value="UniProtKB-UniRule"/>
</dbReference>
<dbReference type="GO" id="GO:0016260">
    <property type="term" value="P:selenocysteine biosynthetic process"/>
    <property type="evidence" value="ECO:0007669"/>
    <property type="project" value="UniProtKB-UniRule"/>
</dbReference>
<dbReference type="GO" id="GO:0006434">
    <property type="term" value="P:seryl-tRNA aminoacylation"/>
    <property type="evidence" value="ECO:0007669"/>
    <property type="project" value="UniProtKB-UniRule"/>
</dbReference>
<dbReference type="CDD" id="cd00770">
    <property type="entry name" value="SerRS_core"/>
    <property type="match status" value="1"/>
</dbReference>
<dbReference type="Gene3D" id="3.30.930.10">
    <property type="entry name" value="Bira Bifunctional Protein, Domain 2"/>
    <property type="match status" value="1"/>
</dbReference>
<dbReference type="Gene3D" id="1.10.287.40">
    <property type="entry name" value="Serine-tRNA synthetase, tRNA binding domain"/>
    <property type="match status" value="1"/>
</dbReference>
<dbReference type="HAMAP" id="MF_00176">
    <property type="entry name" value="Ser_tRNA_synth_type1"/>
    <property type="match status" value="1"/>
</dbReference>
<dbReference type="InterPro" id="IPR002314">
    <property type="entry name" value="aa-tRNA-synt_IIb"/>
</dbReference>
<dbReference type="InterPro" id="IPR006195">
    <property type="entry name" value="aa-tRNA-synth_II"/>
</dbReference>
<dbReference type="InterPro" id="IPR045864">
    <property type="entry name" value="aa-tRNA-synth_II/BPL/LPL"/>
</dbReference>
<dbReference type="InterPro" id="IPR002317">
    <property type="entry name" value="Ser-tRNA-ligase_type_1"/>
</dbReference>
<dbReference type="InterPro" id="IPR015866">
    <property type="entry name" value="Ser-tRNA-synth_1_N"/>
</dbReference>
<dbReference type="InterPro" id="IPR042103">
    <property type="entry name" value="SerRS_1_N_sf"/>
</dbReference>
<dbReference type="InterPro" id="IPR033729">
    <property type="entry name" value="SerRS_core"/>
</dbReference>
<dbReference type="InterPro" id="IPR010978">
    <property type="entry name" value="tRNA-bd_arm"/>
</dbReference>
<dbReference type="NCBIfam" id="TIGR00414">
    <property type="entry name" value="serS"/>
    <property type="match status" value="1"/>
</dbReference>
<dbReference type="PANTHER" id="PTHR43697:SF1">
    <property type="entry name" value="SERINE--TRNA LIGASE"/>
    <property type="match status" value="1"/>
</dbReference>
<dbReference type="PANTHER" id="PTHR43697">
    <property type="entry name" value="SERYL-TRNA SYNTHETASE"/>
    <property type="match status" value="1"/>
</dbReference>
<dbReference type="Pfam" id="PF02403">
    <property type="entry name" value="Seryl_tRNA_N"/>
    <property type="match status" value="1"/>
</dbReference>
<dbReference type="Pfam" id="PF00587">
    <property type="entry name" value="tRNA-synt_2b"/>
    <property type="match status" value="1"/>
</dbReference>
<dbReference type="PIRSF" id="PIRSF001529">
    <property type="entry name" value="Ser-tRNA-synth_IIa"/>
    <property type="match status" value="1"/>
</dbReference>
<dbReference type="PRINTS" id="PR00981">
    <property type="entry name" value="TRNASYNTHSER"/>
</dbReference>
<dbReference type="SUPFAM" id="SSF55681">
    <property type="entry name" value="Class II aaRS and biotin synthetases"/>
    <property type="match status" value="1"/>
</dbReference>
<dbReference type="SUPFAM" id="SSF46589">
    <property type="entry name" value="tRNA-binding arm"/>
    <property type="match status" value="1"/>
</dbReference>
<dbReference type="PROSITE" id="PS50862">
    <property type="entry name" value="AA_TRNA_LIGASE_II"/>
    <property type="match status" value="1"/>
</dbReference>
<sequence>MLDPKRVRTQTEEIARRLAIKNFEFDIATFEQLEERRRAIQVRTENLQSEQNKRSKSIGKAKAAGEDIKPLLEEVESLKQQRGDAEDELRSVQESLNAFFAGIPNLPDDDVPPGASEDDNVETRVWGTPREFDFEPKDHVALGEQLKGLDFEKATQLAHSRFAVMRGQLARLHRALAQFMLDQHTLQHGYTEAYVPYLVNANTLFGTGQLPKFEEDLFRTAGDNPLYLIPTAEVPATNLVADTILDDAELPLRLVCHTPCFRSEAGSYGRDVRGMIRQHQFDKVELVHIVRPDESTQALEELTGHAEKILQLLELPYRVVTLCGGDMGFSAAKTYDLEVWLPGQGKYREISSCSNTRDFQARRMQARWRNPDTGKPEPVHTLNGSGLAVGRAMIAVMENYQQADGSILVPEVLKPYMGGVERIQ</sequence>
<evidence type="ECO:0000255" key="1">
    <source>
        <dbReference type="HAMAP-Rule" id="MF_00176"/>
    </source>
</evidence>
<feature type="chain" id="PRO_1000019723" description="Serine--tRNA ligase">
    <location>
        <begin position="1"/>
        <end position="424"/>
    </location>
</feature>
<feature type="binding site" evidence="1">
    <location>
        <begin position="231"/>
        <end position="233"/>
    </location>
    <ligand>
        <name>L-serine</name>
        <dbReference type="ChEBI" id="CHEBI:33384"/>
    </ligand>
</feature>
<feature type="binding site" evidence="1">
    <location>
        <begin position="262"/>
        <end position="264"/>
    </location>
    <ligand>
        <name>ATP</name>
        <dbReference type="ChEBI" id="CHEBI:30616"/>
    </ligand>
</feature>
<feature type="binding site" evidence="1">
    <location>
        <position position="285"/>
    </location>
    <ligand>
        <name>L-serine</name>
        <dbReference type="ChEBI" id="CHEBI:33384"/>
    </ligand>
</feature>
<feature type="binding site" evidence="1">
    <location>
        <begin position="349"/>
        <end position="352"/>
    </location>
    <ligand>
        <name>ATP</name>
        <dbReference type="ChEBI" id="CHEBI:30616"/>
    </ligand>
</feature>
<feature type="binding site" evidence="1">
    <location>
        <position position="385"/>
    </location>
    <ligand>
        <name>L-serine</name>
        <dbReference type="ChEBI" id="CHEBI:33384"/>
    </ligand>
</feature>
<keyword id="KW-0030">Aminoacyl-tRNA synthetase</keyword>
<keyword id="KW-0067">ATP-binding</keyword>
<keyword id="KW-0963">Cytoplasm</keyword>
<keyword id="KW-0436">Ligase</keyword>
<keyword id="KW-0547">Nucleotide-binding</keyword>
<keyword id="KW-0648">Protein biosynthesis</keyword>
<reference key="1">
    <citation type="journal article" date="2011" name="Appl. Environ. Microbiol.">
        <title>Genomic potential of Marinobacter aquaeolei, a biogeochemical 'opportunitroph'.</title>
        <authorList>
            <person name="Singer E."/>
            <person name="Webb E.A."/>
            <person name="Nelson W.C."/>
            <person name="Heidelberg J.F."/>
            <person name="Ivanova N."/>
            <person name="Pati A."/>
            <person name="Edwards K.J."/>
        </authorList>
    </citation>
    <scope>NUCLEOTIDE SEQUENCE [LARGE SCALE GENOMIC DNA]</scope>
    <source>
        <strain>ATCC 700491 / DSM 11845 / VT8</strain>
    </source>
</reference>